<feature type="chain" id="PRO_0000394964" description="Zinc finger protein 814">
    <location>
        <begin position="1"/>
        <end position="855"/>
    </location>
</feature>
<feature type="domain" description="KRAB" evidence="2">
    <location>
        <begin position="15"/>
        <end position="91"/>
    </location>
</feature>
<feature type="zinc finger region" description="C2H2-type 1; degenerate" evidence="1">
    <location>
        <begin position="120"/>
        <end position="142"/>
    </location>
</feature>
<feature type="zinc finger region" description="C2H2-type 2" evidence="1">
    <location>
        <begin position="242"/>
        <end position="264"/>
    </location>
</feature>
<feature type="zinc finger region" description="C2H2-type 3" evidence="1">
    <location>
        <begin position="269"/>
        <end position="291"/>
    </location>
</feature>
<feature type="zinc finger region" description="C2H2-type 4" evidence="1">
    <location>
        <begin position="296"/>
        <end position="318"/>
    </location>
</feature>
<feature type="zinc finger region" description="C2H2-type 5" evidence="1">
    <location>
        <begin position="324"/>
        <end position="346"/>
    </location>
</feature>
<feature type="zinc finger region" description="C2H2-type 6" evidence="1">
    <location>
        <begin position="352"/>
        <end position="374"/>
    </location>
</feature>
<feature type="zinc finger region" description="C2H2-type 7" evidence="1">
    <location>
        <begin position="380"/>
        <end position="402"/>
    </location>
</feature>
<feature type="zinc finger region" description="C2H2-type 8" evidence="1">
    <location>
        <begin position="408"/>
        <end position="430"/>
    </location>
</feature>
<feature type="zinc finger region" description="C2H2-type 9" evidence="1">
    <location>
        <begin position="436"/>
        <end position="458"/>
    </location>
</feature>
<feature type="zinc finger region" description="C2H2-type 10" evidence="1">
    <location>
        <begin position="464"/>
        <end position="486"/>
    </location>
</feature>
<feature type="zinc finger region" description="C2H2-type 11" evidence="1">
    <location>
        <begin position="492"/>
        <end position="514"/>
    </location>
</feature>
<feature type="zinc finger region" description="C2H2-type 12" evidence="1">
    <location>
        <begin position="520"/>
        <end position="542"/>
    </location>
</feature>
<feature type="zinc finger region" description="C2H2-type 13" evidence="1">
    <location>
        <begin position="548"/>
        <end position="570"/>
    </location>
</feature>
<feature type="zinc finger region" description="C2H2-type 14" evidence="1">
    <location>
        <begin position="576"/>
        <end position="598"/>
    </location>
</feature>
<feature type="zinc finger region" description="C2H2-type 15" evidence="1">
    <location>
        <begin position="604"/>
        <end position="626"/>
    </location>
</feature>
<feature type="zinc finger region" description="C2H2-type 16" evidence="1">
    <location>
        <begin position="632"/>
        <end position="654"/>
    </location>
</feature>
<feature type="zinc finger region" description="C2H2-type 17" evidence="1">
    <location>
        <begin position="660"/>
        <end position="682"/>
    </location>
</feature>
<feature type="zinc finger region" description="C2H2-type 18" evidence="1">
    <location>
        <begin position="688"/>
        <end position="710"/>
    </location>
</feature>
<feature type="zinc finger region" description="C2H2-type 19" evidence="1">
    <location>
        <begin position="716"/>
        <end position="738"/>
    </location>
</feature>
<feature type="zinc finger region" description="C2H2-type 20" evidence="1">
    <location>
        <begin position="744"/>
        <end position="766"/>
    </location>
</feature>
<feature type="zinc finger region" description="C2H2-type 21" evidence="1">
    <location>
        <begin position="772"/>
        <end position="794"/>
    </location>
</feature>
<feature type="zinc finger region" description="C2H2-type 22" evidence="1">
    <location>
        <begin position="800"/>
        <end position="822"/>
    </location>
</feature>
<feature type="zinc finger region" description="C2H2-type 23" evidence="1">
    <location>
        <begin position="828"/>
        <end position="850"/>
    </location>
</feature>
<feature type="cross-link" description="Glycyl lysine isopeptide (Lys-Gly) (interchain with G-Cter in SUMO2)" evidence="4 5">
    <location>
        <position position="335"/>
    </location>
</feature>
<feature type="cross-link" description="Glycyl lysine isopeptide (Lys-Gly) (interchain with G-Cter in SUMO2)" evidence="4 5">
    <location>
        <position position="391"/>
    </location>
</feature>
<feature type="sequence conflict" description="In Ref. 1; BAH13293." evidence="3" ref="1">
    <original>A</original>
    <variation>V</variation>
    <location>
        <position position="158"/>
    </location>
</feature>
<feature type="sequence conflict" description="In Ref. 1; BAH13293." evidence="3" ref="1">
    <original>S</original>
    <variation>C</variation>
    <location>
        <position position="230"/>
    </location>
</feature>
<feature type="sequence conflict" description="In Ref. 1; BAH13293 and 3; EAW72539." evidence="3" ref="1 3">
    <original>H</original>
    <variation>HY</variation>
    <location>
        <position position="296"/>
    </location>
</feature>
<feature type="sequence conflict" description="In Ref. 1; BAH13293." evidence="3" ref="1">
    <original>L</original>
    <variation>H</variation>
    <location>
        <position position="591"/>
    </location>
</feature>
<feature type="sequence conflict" description="In Ref. 1; BAH13293." evidence="3" ref="1">
    <original>E</original>
    <variation>K</variation>
    <location>
        <position position="769"/>
    </location>
</feature>
<dbReference type="EMBL" id="AK300483">
    <property type="protein sequence ID" value="BAH13293.1"/>
    <property type="molecule type" value="mRNA"/>
</dbReference>
<dbReference type="EMBL" id="AC010326">
    <property type="status" value="NOT_ANNOTATED_CDS"/>
    <property type="molecule type" value="Genomic_DNA"/>
</dbReference>
<dbReference type="EMBL" id="CH471135">
    <property type="protein sequence ID" value="EAW72539.1"/>
    <property type="molecule type" value="Genomic_DNA"/>
</dbReference>
<dbReference type="CCDS" id="CCDS46212.1"/>
<dbReference type="RefSeq" id="NP_001138461.1">
    <property type="nucleotide sequence ID" value="NM_001144989.2"/>
</dbReference>
<dbReference type="RefSeq" id="XP_047295265.1">
    <property type="nucleotide sequence ID" value="XM_047439309.1"/>
</dbReference>
<dbReference type="SMR" id="B7Z6K7"/>
<dbReference type="BioGRID" id="610440">
    <property type="interactions" value="1"/>
</dbReference>
<dbReference type="FunCoup" id="B7Z6K7">
    <property type="interactions" value="6"/>
</dbReference>
<dbReference type="STRING" id="9606.ENSP00000410545"/>
<dbReference type="iPTMnet" id="B7Z6K7"/>
<dbReference type="PhosphoSitePlus" id="B7Z6K7"/>
<dbReference type="BioMuta" id="ZNF814"/>
<dbReference type="jPOST" id="B7Z6K7"/>
<dbReference type="MassIVE" id="B7Z6K7"/>
<dbReference type="PaxDb" id="9606-ENSP00000410545"/>
<dbReference type="PeptideAtlas" id="B7Z6K7"/>
<dbReference type="ProteomicsDB" id="6783"/>
<dbReference type="Pumba" id="B7Z6K7"/>
<dbReference type="TopDownProteomics" id="B7Z6K7"/>
<dbReference type="Antibodypedia" id="52693">
    <property type="antibodies" value="2 antibodies from 2 providers"/>
</dbReference>
<dbReference type="DNASU" id="730051"/>
<dbReference type="Ensembl" id="ENST00000435989.7">
    <property type="protein sequence ID" value="ENSP00000410545.1"/>
    <property type="gene ID" value="ENSG00000204514.11"/>
</dbReference>
<dbReference type="GeneID" id="730051"/>
<dbReference type="KEGG" id="hsa:730051"/>
<dbReference type="MANE-Select" id="ENST00000435989.7">
    <property type="protein sequence ID" value="ENSP00000410545.1"/>
    <property type="RefSeq nucleotide sequence ID" value="NM_001144989.2"/>
    <property type="RefSeq protein sequence ID" value="NP_001138461.1"/>
</dbReference>
<dbReference type="UCSC" id="uc002qqo.3">
    <property type="organism name" value="human"/>
</dbReference>
<dbReference type="AGR" id="HGNC:33258"/>
<dbReference type="CTD" id="730051"/>
<dbReference type="DisGeNET" id="730051"/>
<dbReference type="GeneCards" id="ZNF814"/>
<dbReference type="HGNC" id="HGNC:33258">
    <property type="gene designation" value="ZNF814"/>
</dbReference>
<dbReference type="HPA" id="ENSG00000204514">
    <property type="expression patterns" value="Low tissue specificity"/>
</dbReference>
<dbReference type="neXtProt" id="NX_B7Z6K7"/>
<dbReference type="OpenTargets" id="ENSG00000204514"/>
<dbReference type="PharmGKB" id="PA164727759"/>
<dbReference type="VEuPathDB" id="HostDB:ENSG00000204514"/>
<dbReference type="eggNOG" id="KOG1721">
    <property type="taxonomic scope" value="Eukaryota"/>
</dbReference>
<dbReference type="GeneTree" id="ENSGT00940000165204"/>
<dbReference type="HOGENOM" id="CLU_002678_17_1_1"/>
<dbReference type="InParanoid" id="B7Z6K7"/>
<dbReference type="OMA" id="EGPYQCG"/>
<dbReference type="OrthoDB" id="1095242at2759"/>
<dbReference type="PAN-GO" id="B7Z6K7">
    <property type="GO annotations" value="4 GO annotations based on evolutionary models"/>
</dbReference>
<dbReference type="PhylomeDB" id="B7Z6K7"/>
<dbReference type="TreeFam" id="TF343410"/>
<dbReference type="PathwayCommons" id="B7Z6K7"/>
<dbReference type="BioGRID-ORCS" id="730051">
    <property type="hits" value="17 hits in 1184 CRISPR screens"/>
</dbReference>
<dbReference type="ChiTaRS" id="ZNF814">
    <property type="organism name" value="human"/>
</dbReference>
<dbReference type="GenomeRNAi" id="730051"/>
<dbReference type="Pharos" id="B7Z6K7">
    <property type="development level" value="Tdark"/>
</dbReference>
<dbReference type="PRO" id="PR:B7Z6K7"/>
<dbReference type="Proteomes" id="UP000005640">
    <property type="component" value="Chromosome 19"/>
</dbReference>
<dbReference type="RNAct" id="B7Z6K7">
    <property type="molecule type" value="protein"/>
</dbReference>
<dbReference type="Bgee" id="ENSG00000204514">
    <property type="expression patterns" value="Expressed in colonic epithelium and 177 other cell types or tissues"/>
</dbReference>
<dbReference type="ExpressionAtlas" id="B7Z6K7">
    <property type="expression patterns" value="baseline and differential"/>
</dbReference>
<dbReference type="GO" id="GO:0005634">
    <property type="term" value="C:nucleus"/>
    <property type="evidence" value="ECO:0000318"/>
    <property type="project" value="GO_Central"/>
</dbReference>
<dbReference type="GO" id="GO:0008270">
    <property type="term" value="F:zinc ion binding"/>
    <property type="evidence" value="ECO:0007669"/>
    <property type="project" value="UniProtKB-KW"/>
</dbReference>
<dbReference type="GO" id="GO:0006357">
    <property type="term" value="P:regulation of transcription by RNA polymerase II"/>
    <property type="evidence" value="ECO:0000318"/>
    <property type="project" value="GO_Central"/>
</dbReference>
<dbReference type="CDD" id="cd07765">
    <property type="entry name" value="KRAB_A-box"/>
    <property type="match status" value="1"/>
</dbReference>
<dbReference type="FunFam" id="3.30.160.60:FF:003558">
    <property type="match status" value="3"/>
</dbReference>
<dbReference type="FunFam" id="3.30.160.60:FF:004090">
    <property type="match status" value="3"/>
</dbReference>
<dbReference type="FunFam" id="3.30.160.60:FF:000638">
    <property type="entry name" value="Zinc finger protein 184"/>
    <property type="match status" value="1"/>
</dbReference>
<dbReference type="FunFam" id="3.30.160.60:FF:000295">
    <property type="entry name" value="zinc finger protein 19"/>
    <property type="match status" value="2"/>
</dbReference>
<dbReference type="FunFam" id="3.30.160.60:FF:002343">
    <property type="entry name" value="Zinc finger protein 33A"/>
    <property type="match status" value="5"/>
</dbReference>
<dbReference type="FunFam" id="3.30.160.60:FF:002967">
    <property type="entry name" value="Zinc finger protein 417"/>
    <property type="match status" value="1"/>
</dbReference>
<dbReference type="FunFam" id="3.30.160.60:FF:001532">
    <property type="entry name" value="Zinc finger protein 483"/>
    <property type="match status" value="2"/>
</dbReference>
<dbReference type="FunFam" id="3.30.160.60:FF:000490">
    <property type="entry name" value="Zinc finger protein 605"/>
    <property type="match status" value="4"/>
</dbReference>
<dbReference type="FunFam" id="3.30.160.60:FF:000098">
    <property type="entry name" value="Zinc finger protein 614"/>
    <property type="match status" value="1"/>
</dbReference>
<dbReference type="FunFam" id="3.30.160.60:FF:001111">
    <property type="entry name" value="Zinc finger protein 92 homolog"/>
    <property type="match status" value="1"/>
</dbReference>
<dbReference type="Gene3D" id="6.10.140.140">
    <property type="match status" value="1"/>
</dbReference>
<dbReference type="Gene3D" id="3.30.160.60">
    <property type="entry name" value="Classic Zinc Finger"/>
    <property type="match status" value="23"/>
</dbReference>
<dbReference type="InterPro" id="IPR001909">
    <property type="entry name" value="KRAB"/>
</dbReference>
<dbReference type="InterPro" id="IPR036051">
    <property type="entry name" value="KRAB_dom_sf"/>
</dbReference>
<dbReference type="InterPro" id="IPR036236">
    <property type="entry name" value="Znf_C2H2_sf"/>
</dbReference>
<dbReference type="InterPro" id="IPR013087">
    <property type="entry name" value="Znf_C2H2_type"/>
</dbReference>
<dbReference type="PANTHER" id="PTHR23226">
    <property type="entry name" value="ZINC FINGER AND SCAN DOMAIN-CONTAINING"/>
    <property type="match status" value="1"/>
</dbReference>
<dbReference type="PANTHER" id="PTHR23226:SF411">
    <property type="entry name" value="ZINC FINGER PROTEIN 235"/>
    <property type="match status" value="1"/>
</dbReference>
<dbReference type="Pfam" id="PF01352">
    <property type="entry name" value="KRAB"/>
    <property type="match status" value="1"/>
</dbReference>
<dbReference type="Pfam" id="PF00096">
    <property type="entry name" value="zf-C2H2"/>
    <property type="match status" value="22"/>
</dbReference>
<dbReference type="SMART" id="SM00349">
    <property type="entry name" value="KRAB"/>
    <property type="match status" value="1"/>
</dbReference>
<dbReference type="SMART" id="SM00355">
    <property type="entry name" value="ZnF_C2H2"/>
    <property type="match status" value="23"/>
</dbReference>
<dbReference type="SUPFAM" id="SSF57667">
    <property type="entry name" value="beta-beta-alpha zinc fingers"/>
    <property type="match status" value="12"/>
</dbReference>
<dbReference type="SUPFAM" id="SSF109640">
    <property type="entry name" value="KRAB domain (Kruppel-associated box)"/>
    <property type="match status" value="1"/>
</dbReference>
<dbReference type="PROSITE" id="PS50805">
    <property type="entry name" value="KRAB"/>
    <property type="match status" value="1"/>
</dbReference>
<dbReference type="PROSITE" id="PS00028">
    <property type="entry name" value="ZINC_FINGER_C2H2_1"/>
    <property type="match status" value="23"/>
</dbReference>
<dbReference type="PROSITE" id="PS50157">
    <property type="entry name" value="ZINC_FINGER_C2H2_2"/>
    <property type="match status" value="23"/>
</dbReference>
<accession>B7Z6K7</accession>
<accession>A6NF35</accession>
<name>ZN814_HUMAN</name>
<sequence>MAAAATLRLSAQGTVTFEDVAVNFTWEEWNLLSEAQRCLYRDVTLENLALISSLGCWCGVEDEAAPSKQSIYIQRETQVRTPMAGVSPKKAHPCEMCGPILGDILHVADHQGTHHKQKLHRCEAWGNKLYDSGNFHQHQNEHIGEKPYRGSVEEALFAKRCKLHVSGESSVFSESGKDFLPRSGLLQQEASHTGEKSNSKTECVSPIQCGGAHYSCGESMKHFSTKHILSQHQRLLTREECYVCCECGKSFSKYASLSNHQRVHTEKKHECGECGKSFSKYVSFSNHQRVHTEKKHECGECGKSFSKYVSFSNHQRVHTGKRPYECGECGKSFSKYASFSNHQRVHTEKKHYECGECGKSFSKYVSFSNHQRVHTGKRPYECGECGKSFSKYASFSNHQRVHTDKKHYECGECGKSFSQKSSLIQHQRFHTGEKPYGCEECGKSFSSEGHLRSHQRVHAGERPFKCGECVKSFSHKRSLVHHQRVHSGERPYQCGECGKSFSQKGNLVLHQRVHTGARPYECGECGKSFSSKGHLRNHQQIHTGDRLYECGECGKSFSHKGTLILHQRVHPRERSYGCGECGKSFSSIGHLRSHQRVHTGERPYECGECGKSFSHKRSLVHHQRMHTGERPYKCGDCGKSFNEKGHLRNHQRVHTTERPFKCGECGKCFSHKGNLILHQHGHTGERPYVCRECGKLFKKKSHLLVHQRIHNGEKPYACEACQKFFRNKYQLIAHQRVHTGERPYECNDCGKSFTHSSTFCVHKRIHTGEKPYECSECGKSFAESSSFTKHKRVHTGEKPYECSECGKSFAESSSLTKHKRVHTGEKPYKCEKCGKLFNKKSHLLVHQSSHWRKAI</sequence>
<proteinExistence type="evidence at protein level"/>
<protein>
    <recommendedName>
        <fullName>Zinc finger protein 814</fullName>
    </recommendedName>
</protein>
<gene>
    <name type="primary">ZNF814</name>
</gene>
<keyword id="KW-1017">Isopeptide bond</keyword>
<keyword id="KW-0479">Metal-binding</keyword>
<keyword id="KW-1267">Proteomics identification</keyword>
<keyword id="KW-1185">Reference proteome</keyword>
<keyword id="KW-0677">Repeat</keyword>
<keyword id="KW-0832">Ubl conjugation</keyword>
<keyword id="KW-0862">Zinc</keyword>
<keyword id="KW-0863">Zinc-finger</keyword>
<organism>
    <name type="scientific">Homo sapiens</name>
    <name type="common">Human</name>
    <dbReference type="NCBI Taxonomy" id="9606"/>
    <lineage>
        <taxon>Eukaryota</taxon>
        <taxon>Metazoa</taxon>
        <taxon>Chordata</taxon>
        <taxon>Craniata</taxon>
        <taxon>Vertebrata</taxon>
        <taxon>Euteleostomi</taxon>
        <taxon>Mammalia</taxon>
        <taxon>Eutheria</taxon>
        <taxon>Euarchontoglires</taxon>
        <taxon>Primates</taxon>
        <taxon>Haplorrhini</taxon>
        <taxon>Catarrhini</taxon>
        <taxon>Hominidae</taxon>
        <taxon>Homo</taxon>
    </lineage>
</organism>
<reference key="1">
    <citation type="journal article" date="2004" name="Nat. Genet.">
        <title>Complete sequencing and characterization of 21,243 full-length human cDNAs.</title>
        <authorList>
            <person name="Ota T."/>
            <person name="Suzuki Y."/>
            <person name="Nishikawa T."/>
            <person name="Otsuki T."/>
            <person name="Sugiyama T."/>
            <person name="Irie R."/>
            <person name="Wakamatsu A."/>
            <person name="Hayashi K."/>
            <person name="Sato H."/>
            <person name="Nagai K."/>
            <person name="Kimura K."/>
            <person name="Makita H."/>
            <person name="Sekine M."/>
            <person name="Obayashi M."/>
            <person name="Nishi T."/>
            <person name="Shibahara T."/>
            <person name="Tanaka T."/>
            <person name="Ishii S."/>
            <person name="Yamamoto J."/>
            <person name="Saito K."/>
            <person name="Kawai Y."/>
            <person name="Isono Y."/>
            <person name="Nakamura Y."/>
            <person name="Nagahari K."/>
            <person name="Murakami K."/>
            <person name="Yasuda T."/>
            <person name="Iwayanagi T."/>
            <person name="Wagatsuma M."/>
            <person name="Shiratori A."/>
            <person name="Sudo H."/>
            <person name="Hosoiri T."/>
            <person name="Kaku Y."/>
            <person name="Kodaira H."/>
            <person name="Kondo H."/>
            <person name="Sugawara M."/>
            <person name="Takahashi M."/>
            <person name="Kanda K."/>
            <person name="Yokoi T."/>
            <person name="Furuya T."/>
            <person name="Kikkawa E."/>
            <person name="Omura Y."/>
            <person name="Abe K."/>
            <person name="Kamihara K."/>
            <person name="Katsuta N."/>
            <person name="Sato K."/>
            <person name="Tanikawa M."/>
            <person name="Yamazaki M."/>
            <person name="Ninomiya K."/>
            <person name="Ishibashi T."/>
            <person name="Yamashita H."/>
            <person name="Murakawa K."/>
            <person name="Fujimori K."/>
            <person name="Tanai H."/>
            <person name="Kimata M."/>
            <person name="Watanabe M."/>
            <person name="Hiraoka S."/>
            <person name="Chiba Y."/>
            <person name="Ishida S."/>
            <person name="Ono Y."/>
            <person name="Takiguchi S."/>
            <person name="Watanabe S."/>
            <person name="Yosida M."/>
            <person name="Hotuta T."/>
            <person name="Kusano J."/>
            <person name="Kanehori K."/>
            <person name="Takahashi-Fujii A."/>
            <person name="Hara H."/>
            <person name="Tanase T.-O."/>
            <person name="Nomura Y."/>
            <person name="Togiya S."/>
            <person name="Komai F."/>
            <person name="Hara R."/>
            <person name="Takeuchi K."/>
            <person name="Arita M."/>
            <person name="Imose N."/>
            <person name="Musashino K."/>
            <person name="Yuuki H."/>
            <person name="Oshima A."/>
            <person name="Sasaki N."/>
            <person name="Aotsuka S."/>
            <person name="Yoshikawa Y."/>
            <person name="Matsunawa H."/>
            <person name="Ichihara T."/>
            <person name="Shiohata N."/>
            <person name="Sano S."/>
            <person name="Moriya S."/>
            <person name="Momiyama H."/>
            <person name="Satoh N."/>
            <person name="Takami S."/>
            <person name="Terashima Y."/>
            <person name="Suzuki O."/>
            <person name="Nakagawa S."/>
            <person name="Senoh A."/>
            <person name="Mizoguchi H."/>
            <person name="Goto Y."/>
            <person name="Shimizu F."/>
            <person name="Wakebe H."/>
            <person name="Hishigaki H."/>
            <person name="Watanabe T."/>
            <person name="Sugiyama A."/>
            <person name="Takemoto M."/>
            <person name="Kawakami B."/>
            <person name="Yamazaki M."/>
            <person name="Watanabe K."/>
            <person name="Kumagai A."/>
            <person name="Itakura S."/>
            <person name="Fukuzumi Y."/>
            <person name="Fujimori Y."/>
            <person name="Komiyama M."/>
            <person name="Tashiro H."/>
            <person name="Tanigami A."/>
            <person name="Fujiwara T."/>
            <person name="Ono T."/>
            <person name="Yamada K."/>
            <person name="Fujii Y."/>
            <person name="Ozaki K."/>
            <person name="Hirao M."/>
            <person name="Ohmori Y."/>
            <person name="Kawabata A."/>
            <person name="Hikiji T."/>
            <person name="Kobatake N."/>
            <person name="Inagaki H."/>
            <person name="Ikema Y."/>
            <person name="Okamoto S."/>
            <person name="Okitani R."/>
            <person name="Kawakami T."/>
            <person name="Noguchi S."/>
            <person name="Itoh T."/>
            <person name="Shigeta K."/>
            <person name="Senba T."/>
            <person name="Matsumura K."/>
            <person name="Nakajima Y."/>
            <person name="Mizuno T."/>
            <person name="Morinaga M."/>
            <person name="Sasaki M."/>
            <person name="Togashi T."/>
            <person name="Oyama M."/>
            <person name="Hata H."/>
            <person name="Watanabe M."/>
            <person name="Komatsu T."/>
            <person name="Mizushima-Sugano J."/>
            <person name="Satoh T."/>
            <person name="Shirai Y."/>
            <person name="Takahashi Y."/>
            <person name="Nakagawa K."/>
            <person name="Okumura K."/>
            <person name="Nagase T."/>
            <person name="Nomura N."/>
            <person name="Kikuchi H."/>
            <person name="Masuho Y."/>
            <person name="Yamashita R."/>
            <person name="Nakai K."/>
            <person name="Yada T."/>
            <person name="Nakamura Y."/>
            <person name="Ohara O."/>
            <person name="Isogai T."/>
            <person name="Sugano S."/>
        </authorList>
    </citation>
    <scope>NUCLEOTIDE SEQUENCE [LARGE SCALE MRNA]</scope>
    <source>
        <tissue>Prostate</tissue>
    </source>
</reference>
<reference key="2">
    <citation type="journal article" date="2004" name="Nature">
        <title>The DNA sequence and biology of human chromosome 19.</title>
        <authorList>
            <person name="Grimwood J."/>
            <person name="Gordon L.A."/>
            <person name="Olsen A.S."/>
            <person name="Terry A."/>
            <person name="Schmutz J."/>
            <person name="Lamerdin J.E."/>
            <person name="Hellsten U."/>
            <person name="Goodstein D."/>
            <person name="Couronne O."/>
            <person name="Tran-Gyamfi M."/>
            <person name="Aerts A."/>
            <person name="Altherr M."/>
            <person name="Ashworth L."/>
            <person name="Bajorek E."/>
            <person name="Black S."/>
            <person name="Branscomb E."/>
            <person name="Caenepeel S."/>
            <person name="Carrano A.V."/>
            <person name="Caoile C."/>
            <person name="Chan Y.M."/>
            <person name="Christensen M."/>
            <person name="Cleland C.A."/>
            <person name="Copeland A."/>
            <person name="Dalin E."/>
            <person name="Dehal P."/>
            <person name="Denys M."/>
            <person name="Detter J.C."/>
            <person name="Escobar J."/>
            <person name="Flowers D."/>
            <person name="Fotopulos D."/>
            <person name="Garcia C."/>
            <person name="Georgescu A.M."/>
            <person name="Glavina T."/>
            <person name="Gomez M."/>
            <person name="Gonzales E."/>
            <person name="Groza M."/>
            <person name="Hammon N."/>
            <person name="Hawkins T."/>
            <person name="Haydu L."/>
            <person name="Ho I."/>
            <person name="Huang W."/>
            <person name="Israni S."/>
            <person name="Jett J."/>
            <person name="Kadner K."/>
            <person name="Kimball H."/>
            <person name="Kobayashi A."/>
            <person name="Larionov V."/>
            <person name="Leem S.-H."/>
            <person name="Lopez F."/>
            <person name="Lou Y."/>
            <person name="Lowry S."/>
            <person name="Malfatti S."/>
            <person name="Martinez D."/>
            <person name="McCready P.M."/>
            <person name="Medina C."/>
            <person name="Morgan J."/>
            <person name="Nelson K."/>
            <person name="Nolan M."/>
            <person name="Ovcharenko I."/>
            <person name="Pitluck S."/>
            <person name="Pollard M."/>
            <person name="Popkie A.P."/>
            <person name="Predki P."/>
            <person name="Quan G."/>
            <person name="Ramirez L."/>
            <person name="Rash S."/>
            <person name="Retterer J."/>
            <person name="Rodriguez A."/>
            <person name="Rogers S."/>
            <person name="Salamov A."/>
            <person name="Salazar A."/>
            <person name="She X."/>
            <person name="Smith D."/>
            <person name="Slezak T."/>
            <person name="Solovyev V."/>
            <person name="Thayer N."/>
            <person name="Tice H."/>
            <person name="Tsai M."/>
            <person name="Ustaszewska A."/>
            <person name="Vo N."/>
            <person name="Wagner M."/>
            <person name="Wheeler J."/>
            <person name="Wu K."/>
            <person name="Xie G."/>
            <person name="Yang J."/>
            <person name="Dubchak I."/>
            <person name="Furey T.S."/>
            <person name="DeJong P."/>
            <person name="Dickson M."/>
            <person name="Gordon D."/>
            <person name="Eichler E.E."/>
            <person name="Pennacchio L.A."/>
            <person name="Richardson P."/>
            <person name="Stubbs L."/>
            <person name="Rokhsar D.S."/>
            <person name="Myers R.M."/>
            <person name="Rubin E.M."/>
            <person name="Lucas S.M."/>
        </authorList>
    </citation>
    <scope>NUCLEOTIDE SEQUENCE [LARGE SCALE GENOMIC DNA]</scope>
</reference>
<reference key="3">
    <citation type="submission" date="2005-07" db="EMBL/GenBank/DDBJ databases">
        <authorList>
            <person name="Mural R.J."/>
            <person name="Istrail S."/>
            <person name="Sutton G.G."/>
            <person name="Florea L."/>
            <person name="Halpern A.L."/>
            <person name="Mobarry C.M."/>
            <person name="Lippert R."/>
            <person name="Walenz B."/>
            <person name="Shatkay H."/>
            <person name="Dew I."/>
            <person name="Miller J.R."/>
            <person name="Flanigan M.J."/>
            <person name="Edwards N.J."/>
            <person name="Bolanos R."/>
            <person name="Fasulo D."/>
            <person name="Halldorsson B.V."/>
            <person name="Hannenhalli S."/>
            <person name="Turner R."/>
            <person name="Yooseph S."/>
            <person name="Lu F."/>
            <person name="Nusskern D.R."/>
            <person name="Shue B.C."/>
            <person name="Zheng X.H."/>
            <person name="Zhong F."/>
            <person name="Delcher A.L."/>
            <person name="Huson D.H."/>
            <person name="Kravitz S.A."/>
            <person name="Mouchard L."/>
            <person name="Reinert K."/>
            <person name="Remington K.A."/>
            <person name="Clark A.G."/>
            <person name="Waterman M.S."/>
            <person name="Eichler E.E."/>
            <person name="Adams M.D."/>
            <person name="Hunkapiller M.W."/>
            <person name="Myers E.W."/>
            <person name="Venter J.C."/>
        </authorList>
    </citation>
    <scope>NUCLEOTIDE SEQUENCE [LARGE SCALE GENOMIC DNA]</scope>
</reference>
<reference key="4">
    <citation type="journal article" date="2014" name="Nat. Struct. Mol. Biol.">
        <title>Uncovering global SUMOylation signaling networks in a site-specific manner.</title>
        <authorList>
            <person name="Hendriks I.A."/>
            <person name="D'Souza R.C."/>
            <person name="Yang B."/>
            <person name="Verlaan-de Vries M."/>
            <person name="Mann M."/>
            <person name="Vertegaal A.C."/>
        </authorList>
    </citation>
    <scope>SUMOYLATION [LARGE SCALE ANALYSIS] AT LYS-335 AND LYS-391</scope>
    <scope>IDENTIFICATION BY MASS SPECTROMETRY [LARGE SCALE ANALYSIS]</scope>
</reference>
<reference key="5">
    <citation type="journal article" date="2017" name="Nat. Struct. Mol. Biol.">
        <title>Site-specific mapping of the human SUMO proteome reveals co-modification with phosphorylation.</title>
        <authorList>
            <person name="Hendriks I.A."/>
            <person name="Lyon D."/>
            <person name="Young C."/>
            <person name="Jensen L.J."/>
            <person name="Vertegaal A.C."/>
            <person name="Nielsen M.L."/>
        </authorList>
    </citation>
    <scope>SUMOYLATION [LARGE SCALE ANALYSIS] AT LYS-335 AND LYS-391</scope>
    <scope>IDENTIFICATION BY MASS SPECTROMETRY [LARGE SCALE ANALYSIS]</scope>
</reference>
<evidence type="ECO:0000255" key="1">
    <source>
        <dbReference type="PROSITE-ProRule" id="PRU00042"/>
    </source>
</evidence>
<evidence type="ECO:0000255" key="2">
    <source>
        <dbReference type="PROSITE-ProRule" id="PRU00119"/>
    </source>
</evidence>
<evidence type="ECO:0000305" key="3"/>
<evidence type="ECO:0007744" key="4">
    <source>
    </source>
</evidence>
<evidence type="ECO:0007744" key="5">
    <source>
    </source>
</evidence>